<sequence length="420" mass="45212">MFTRDMQIAGFDDALWDAMQQEVGRQEAHIELIASENYASPRVMQAQGTQLTNKYAEGYPGKRYYGGCEHVDVVEDLAIQYAKELFGATYANVQPHSGSQANGAVFQALVKPGDTVLGMSLDAGGHLTHGAKPNFSGKHYNAVQYGLDENGLIDYDEVARLAREHQPKMIIAGFSAYSQVIDWARFREIADDVGAFLLVDMAHIAGLVAAGVYPSPLPHAHVVTTTTHKTLRGPRGGLILSAENNAEIEKKFQSAVFPGSQGGPLMHVIAAKAICFKEAMEPDFKAYQQQVIDNAKAMAGVFIERGYDVVSGGTEDHLFLLSLVKQGLTGKDADAALGRAHITVNKNAVPNDPQSPFVTSGLRIGTPAVTTRGFGESECADLAGWICDILDAMQQGDASQAEADVKAKVEAVCARLPVYR</sequence>
<reference key="1">
    <citation type="journal article" date="2011" name="Stand. Genomic Sci.">
        <title>Complete genome sequence of the halophilic and highly halotolerant Chromohalobacter salexigens type strain (1H11(T)).</title>
        <authorList>
            <person name="Copeland A."/>
            <person name="O'Connor K."/>
            <person name="Lucas S."/>
            <person name="Lapidus A."/>
            <person name="Berry K.W."/>
            <person name="Detter J.C."/>
            <person name="Del Rio T.G."/>
            <person name="Hammon N."/>
            <person name="Dalin E."/>
            <person name="Tice H."/>
            <person name="Pitluck S."/>
            <person name="Bruce D."/>
            <person name="Goodwin L."/>
            <person name="Han C."/>
            <person name="Tapia R."/>
            <person name="Saunders E."/>
            <person name="Schmutz J."/>
            <person name="Brettin T."/>
            <person name="Larimer F."/>
            <person name="Land M."/>
            <person name="Hauser L."/>
            <person name="Vargas C."/>
            <person name="Nieto J.J."/>
            <person name="Kyrpides N.C."/>
            <person name="Ivanova N."/>
            <person name="Goker M."/>
            <person name="Klenk H.P."/>
            <person name="Csonka L.N."/>
            <person name="Woyke T."/>
        </authorList>
    </citation>
    <scope>NUCLEOTIDE SEQUENCE [LARGE SCALE GENOMIC DNA]</scope>
    <source>
        <strain>ATCC BAA-138 / DSM 3043 / CIP 106854 / NCIMB 13768 / 1H11</strain>
    </source>
</reference>
<protein>
    <recommendedName>
        <fullName evidence="1">Serine hydroxymethyltransferase</fullName>
        <shortName evidence="1">SHMT</shortName>
        <shortName evidence="1">Serine methylase</shortName>
        <ecNumber evidence="1">2.1.2.1</ecNumber>
    </recommendedName>
</protein>
<comment type="function">
    <text evidence="1">Catalyzes the reversible interconversion of serine and glycine with tetrahydrofolate (THF) serving as the one-carbon carrier. This reaction serves as the major source of one-carbon groups required for the biosynthesis of purines, thymidylate, methionine, and other important biomolecules. Also exhibits THF-independent aldolase activity toward beta-hydroxyamino acids, producing glycine and aldehydes, via a retro-aldol mechanism.</text>
</comment>
<comment type="catalytic activity">
    <reaction evidence="1">
        <text>(6R)-5,10-methylene-5,6,7,8-tetrahydrofolate + glycine + H2O = (6S)-5,6,7,8-tetrahydrofolate + L-serine</text>
        <dbReference type="Rhea" id="RHEA:15481"/>
        <dbReference type="ChEBI" id="CHEBI:15377"/>
        <dbReference type="ChEBI" id="CHEBI:15636"/>
        <dbReference type="ChEBI" id="CHEBI:33384"/>
        <dbReference type="ChEBI" id="CHEBI:57305"/>
        <dbReference type="ChEBI" id="CHEBI:57453"/>
        <dbReference type="EC" id="2.1.2.1"/>
    </reaction>
</comment>
<comment type="cofactor">
    <cofactor evidence="1">
        <name>pyridoxal 5'-phosphate</name>
        <dbReference type="ChEBI" id="CHEBI:597326"/>
    </cofactor>
</comment>
<comment type="pathway">
    <text evidence="1">One-carbon metabolism; tetrahydrofolate interconversion.</text>
</comment>
<comment type="pathway">
    <text evidence="1">Amino-acid biosynthesis; glycine biosynthesis; glycine from L-serine: step 1/1.</text>
</comment>
<comment type="subunit">
    <text evidence="1">Homodimer.</text>
</comment>
<comment type="subcellular location">
    <subcellularLocation>
        <location evidence="1">Cytoplasm</location>
    </subcellularLocation>
</comment>
<comment type="similarity">
    <text evidence="1">Belongs to the SHMT family.</text>
</comment>
<feature type="chain" id="PRO_1000006235" description="Serine hydroxymethyltransferase">
    <location>
        <begin position="1"/>
        <end position="420"/>
    </location>
</feature>
<feature type="binding site" evidence="1">
    <location>
        <position position="121"/>
    </location>
    <ligand>
        <name>(6S)-5,6,7,8-tetrahydrofolate</name>
        <dbReference type="ChEBI" id="CHEBI:57453"/>
    </ligand>
</feature>
<feature type="binding site" evidence="1">
    <location>
        <begin position="125"/>
        <end position="127"/>
    </location>
    <ligand>
        <name>(6S)-5,6,7,8-tetrahydrofolate</name>
        <dbReference type="ChEBI" id="CHEBI:57453"/>
    </ligand>
</feature>
<feature type="binding site" evidence="1">
    <location>
        <begin position="355"/>
        <end position="357"/>
    </location>
    <ligand>
        <name>(6S)-5,6,7,8-tetrahydrofolate</name>
        <dbReference type="ChEBI" id="CHEBI:57453"/>
    </ligand>
</feature>
<feature type="site" description="Plays an important role in substrate specificity" evidence="1">
    <location>
        <position position="228"/>
    </location>
</feature>
<feature type="modified residue" description="N6-(pyridoxal phosphate)lysine" evidence="1">
    <location>
        <position position="229"/>
    </location>
</feature>
<name>GLYA_CHRSD</name>
<keyword id="KW-0028">Amino-acid biosynthesis</keyword>
<keyword id="KW-0963">Cytoplasm</keyword>
<keyword id="KW-0554">One-carbon metabolism</keyword>
<keyword id="KW-0663">Pyridoxal phosphate</keyword>
<keyword id="KW-1185">Reference proteome</keyword>
<keyword id="KW-0808">Transferase</keyword>
<dbReference type="EC" id="2.1.2.1" evidence="1"/>
<dbReference type="EMBL" id="CP000285">
    <property type="protein sequence ID" value="ABE59964.1"/>
    <property type="molecule type" value="Genomic_DNA"/>
</dbReference>
<dbReference type="RefSeq" id="WP_011507910.1">
    <property type="nucleotide sequence ID" value="NC_007963.1"/>
</dbReference>
<dbReference type="SMR" id="Q1QU94"/>
<dbReference type="STRING" id="290398.Csal_2617"/>
<dbReference type="GeneID" id="95335316"/>
<dbReference type="KEGG" id="csa:Csal_2617"/>
<dbReference type="eggNOG" id="COG0112">
    <property type="taxonomic scope" value="Bacteria"/>
</dbReference>
<dbReference type="HOGENOM" id="CLU_022477_2_1_6"/>
<dbReference type="OrthoDB" id="9803846at2"/>
<dbReference type="UniPathway" id="UPA00193"/>
<dbReference type="UniPathway" id="UPA00288">
    <property type="reaction ID" value="UER01023"/>
</dbReference>
<dbReference type="Proteomes" id="UP000000239">
    <property type="component" value="Chromosome"/>
</dbReference>
<dbReference type="GO" id="GO:0005829">
    <property type="term" value="C:cytosol"/>
    <property type="evidence" value="ECO:0007669"/>
    <property type="project" value="TreeGrafter"/>
</dbReference>
<dbReference type="GO" id="GO:0004372">
    <property type="term" value="F:glycine hydroxymethyltransferase activity"/>
    <property type="evidence" value="ECO:0007669"/>
    <property type="project" value="UniProtKB-UniRule"/>
</dbReference>
<dbReference type="GO" id="GO:0030170">
    <property type="term" value="F:pyridoxal phosphate binding"/>
    <property type="evidence" value="ECO:0007669"/>
    <property type="project" value="UniProtKB-UniRule"/>
</dbReference>
<dbReference type="GO" id="GO:0019264">
    <property type="term" value="P:glycine biosynthetic process from serine"/>
    <property type="evidence" value="ECO:0007669"/>
    <property type="project" value="UniProtKB-UniRule"/>
</dbReference>
<dbReference type="GO" id="GO:0035999">
    <property type="term" value="P:tetrahydrofolate interconversion"/>
    <property type="evidence" value="ECO:0007669"/>
    <property type="project" value="UniProtKB-UniRule"/>
</dbReference>
<dbReference type="CDD" id="cd00378">
    <property type="entry name" value="SHMT"/>
    <property type="match status" value="1"/>
</dbReference>
<dbReference type="FunFam" id="3.40.640.10:FF:000001">
    <property type="entry name" value="Serine hydroxymethyltransferase"/>
    <property type="match status" value="1"/>
</dbReference>
<dbReference type="FunFam" id="3.90.1150.10:FF:000003">
    <property type="entry name" value="Serine hydroxymethyltransferase"/>
    <property type="match status" value="1"/>
</dbReference>
<dbReference type="Gene3D" id="3.90.1150.10">
    <property type="entry name" value="Aspartate Aminotransferase, domain 1"/>
    <property type="match status" value="1"/>
</dbReference>
<dbReference type="Gene3D" id="3.40.640.10">
    <property type="entry name" value="Type I PLP-dependent aspartate aminotransferase-like (Major domain)"/>
    <property type="match status" value="1"/>
</dbReference>
<dbReference type="HAMAP" id="MF_00051">
    <property type="entry name" value="SHMT"/>
    <property type="match status" value="1"/>
</dbReference>
<dbReference type="InterPro" id="IPR015424">
    <property type="entry name" value="PyrdxlP-dep_Trfase"/>
</dbReference>
<dbReference type="InterPro" id="IPR015421">
    <property type="entry name" value="PyrdxlP-dep_Trfase_major"/>
</dbReference>
<dbReference type="InterPro" id="IPR015422">
    <property type="entry name" value="PyrdxlP-dep_Trfase_small"/>
</dbReference>
<dbReference type="InterPro" id="IPR001085">
    <property type="entry name" value="Ser_HO-MeTrfase"/>
</dbReference>
<dbReference type="InterPro" id="IPR049943">
    <property type="entry name" value="Ser_HO-MeTrfase-like"/>
</dbReference>
<dbReference type="InterPro" id="IPR019798">
    <property type="entry name" value="Ser_HO-MeTrfase_PLP_BS"/>
</dbReference>
<dbReference type="InterPro" id="IPR039429">
    <property type="entry name" value="SHMT-like_dom"/>
</dbReference>
<dbReference type="NCBIfam" id="NF000586">
    <property type="entry name" value="PRK00011.1"/>
    <property type="match status" value="1"/>
</dbReference>
<dbReference type="PANTHER" id="PTHR11680">
    <property type="entry name" value="SERINE HYDROXYMETHYLTRANSFERASE"/>
    <property type="match status" value="1"/>
</dbReference>
<dbReference type="PANTHER" id="PTHR11680:SF50">
    <property type="entry name" value="SERINE HYDROXYMETHYLTRANSFERASE"/>
    <property type="match status" value="1"/>
</dbReference>
<dbReference type="Pfam" id="PF00464">
    <property type="entry name" value="SHMT"/>
    <property type="match status" value="1"/>
</dbReference>
<dbReference type="PIRSF" id="PIRSF000412">
    <property type="entry name" value="SHMT"/>
    <property type="match status" value="1"/>
</dbReference>
<dbReference type="SUPFAM" id="SSF53383">
    <property type="entry name" value="PLP-dependent transferases"/>
    <property type="match status" value="1"/>
</dbReference>
<dbReference type="PROSITE" id="PS00096">
    <property type="entry name" value="SHMT"/>
    <property type="match status" value="1"/>
</dbReference>
<organism>
    <name type="scientific">Chromohalobacter salexigens (strain ATCC BAA-138 / DSM 3043 / CIP 106854 / NCIMB 13768 / 1H11)</name>
    <dbReference type="NCBI Taxonomy" id="290398"/>
    <lineage>
        <taxon>Bacteria</taxon>
        <taxon>Pseudomonadati</taxon>
        <taxon>Pseudomonadota</taxon>
        <taxon>Gammaproteobacteria</taxon>
        <taxon>Oceanospirillales</taxon>
        <taxon>Halomonadaceae</taxon>
        <taxon>Chromohalobacter</taxon>
    </lineage>
</organism>
<proteinExistence type="inferred from homology"/>
<evidence type="ECO:0000255" key="1">
    <source>
        <dbReference type="HAMAP-Rule" id="MF_00051"/>
    </source>
</evidence>
<gene>
    <name evidence="1" type="primary">glyA</name>
    <name type="ordered locus">Csal_2617</name>
</gene>
<accession>Q1QU94</accession>